<feature type="chain" id="PRO_0000300134" description="Cytochrome b6-f complex subunit 6">
    <location>
        <begin position="1"/>
        <end position="31"/>
    </location>
</feature>
<feature type="transmembrane region" description="Helical" evidence="1">
    <location>
        <begin position="4"/>
        <end position="24"/>
    </location>
</feature>
<proteinExistence type="inferred from homology"/>
<gene>
    <name evidence="1" type="primary">petL</name>
</gene>
<sequence length="31" mass="3401">MPTITSYFGFLLAALTITSVLFIGLSKIRLI</sequence>
<reference key="1">
    <citation type="submission" date="2007-03" db="EMBL/GenBank/DDBJ databases">
        <title>Sequencing analysis of Arabis hirsuta chloroplast DNA.</title>
        <authorList>
            <person name="Hosouchi T."/>
            <person name="Tsuruoka H."/>
            <person name="Kotani H."/>
        </authorList>
    </citation>
    <scope>NUCLEOTIDE SEQUENCE [LARGE SCALE GENOMIC DNA]</scope>
</reference>
<protein>
    <recommendedName>
        <fullName evidence="1">Cytochrome b6-f complex subunit 6</fullName>
    </recommendedName>
    <alternativeName>
        <fullName evidence="1">Cytochrome b6-f complex subunit PetL</fullName>
    </alternativeName>
    <alternativeName>
        <fullName evidence="1">Cytochrome b6-f complex subunit VI</fullName>
    </alternativeName>
</protein>
<geneLocation type="chloroplast"/>
<name>PETL_ARAHI</name>
<evidence type="ECO:0000255" key="1">
    <source>
        <dbReference type="HAMAP-Rule" id="MF_00433"/>
    </source>
</evidence>
<dbReference type="EMBL" id="AP009369">
    <property type="protein sequence ID" value="BAF50041.1"/>
    <property type="molecule type" value="Genomic_DNA"/>
</dbReference>
<dbReference type="RefSeq" id="YP_001123217.1">
    <property type="nucleotide sequence ID" value="NC_009268.1"/>
</dbReference>
<dbReference type="SMR" id="A4QK36"/>
<dbReference type="GeneID" id="4962528"/>
<dbReference type="GO" id="GO:0009535">
    <property type="term" value="C:chloroplast thylakoid membrane"/>
    <property type="evidence" value="ECO:0007669"/>
    <property type="project" value="UniProtKB-SubCell"/>
</dbReference>
<dbReference type="GO" id="GO:0009512">
    <property type="term" value="C:cytochrome b6f complex"/>
    <property type="evidence" value="ECO:0007669"/>
    <property type="project" value="InterPro"/>
</dbReference>
<dbReference type="GO" id="GO:0045158">
    <property type="term" value="F:electron transporter, transferring electrons within cytochrome b6/f complex of photosystem II activity"/>
    <property type="evidence" value="ECO:0007669"/>
    <property type="project" value="UniProtKB-UniRule"/>
</dbReference>
<dbReference type="GO" id="GO:0015979">
    <property type="term" value="P:photosynthesis"/>
    <property type="evidence" value="ECO:0007669"/>
    <property type="project" value="UniProtKB-KW"/>
</dbReference>
<dbReference type="HAMAP" id="MF_00433">
    <property type="entry name" value="Cytb6_f_PetL"/>
    <property type="match status" value="1"/>
</dbReference>
<dbReference type="InterPro" id="IPR007802">
    <property type="entry name" value="Cyt_b6/f_cplx_su6"/>
</dbReference>
<dbReference type="PANTHER" id="PTHR37266">
    <property type="entry name" value="CYTOCHROME B6-F COMPLEX SUBUNIT 6"/>
    <property type="match status" value="1"/>
</dbReference>
<dbReference type="PANTHER" id="PTHR37266:SF1">
    <property type="entry name" value="CYTOCHROME B6-F COMPLEX SUBUNIT 6"/>
    <property type="match status" value="1"/>
</dbReference>
<dbReference type="Pfam" id="PF05115">
    <property type="entry name" value="PetL"/>
    <property type="match status" value="1"/>
</dbReference>
<accession>A4QK36</accession>
<keyword id="KW-0150">Chloroplast</keyword>
<keyword id="KW-0249">Electron transport</keyword>
<keyword id="KW-0472">Membrane</keyword>
<keyword id="KW-0602">Photosynthesis</keyword>
<keyword id="KW-0934">Plastid</keyword>
<keyword id="KW-0793">Thylakoid</keyword>
<keyword id="KW-0812">Transmembrane</keyword>
<keyword id="KW-1133">Transmembrane helix</keyword>
<keyword id="KW-0813">Transport</keyword>
<comment type="function">
    <text evidence="1">Component of the cytochrome b6-f complex, which mediates electron transfer between photosystem II (PSII) and photosystem I (PSI), cyclic electron flow around PSI, and state transitions. PetL is important for photoautotrophic growth as well as for electron transfer efficiency and stability of the cytochrome b6-f complex.</text>
</comment>
<comment type="subunit">
    <text evidence="1">The 4 large subunits of the cytochrome b6-f complex are cytochrome b6, subunit IV (17 kDa polypeptide, PetD), cytochrome f and the Rieske protein, while the 4 small subunits are PetG, PetL, PetM and PetN. The complex functions as a dimer.</text>
</comment>
<comment type="subcellular location">
    <subcellularLocation>
        <location evidence="1">Plastid</location>
        <location evidence="1">Chloroplast thylakoid membrane</location>
        <topology evidence="1">Single-pass membrane protein</topology>
    </subcellularLocation>
</comment>
<comment type="similarity">
    <text evidence="1">Belongs to the PetL family.</text>
</comment>
<organism>
    <name type="scientific">Arabis hirsuta</name>
    <name type="common">Hairy rock-cress</name>
    <name type="synonym">Turritis hirsuta</name>
    <dbReference type="NCBI Taxonomy" id="78191"/>
    <lineage>
        <taxon>Eukaryota</taxon>
        <taxon>Viridiplantae</taxon>
        <taxon>Streptophyta</taxon>
        <taxon>Embryophyta</taxon>
        <taxon>Tracheophyta</taxon>
        <taxon>Spermatophyta</taxon>
        <taxon>Magnoliopsida</taxon>
        <taxon>eudicotyledons</taxon>
        <taxon>Gunneridae</taxon>
        <taxon>Pentapetalae</taxon>
        <taxon>rosids</taxon>
        <taxon>malvids</taxon>
        <taxon>Brassicales</taxon>
        <taxon>Brassicaceae</taxon>
        <taxon>Arabideae</taxon>
        <taxon>Arabis</taxon>
    </lineage>
</organism>